<name>ARFG3_BOVIN</name>
<organism>
    <name type="scientific">Bos taurus</name>
    <name type="common">Bovine</name>
    <dbReference type="NCBI Taxonomy" id="9913"/>
    <lineage>
        <taxon>Eukaryota</taxon>
        <taxon>Metazoa</taxon>
        <taxon>Chordata</taxon>
        <taxon>Craniata</taxon>
        <taxon>Vertebrata</taxon>
        <taxon>Euteleostomi</taxon>
        <taxon>Mammalia</taxon>
        <taxon>Eutheria</taxon>
        <taxon>Laurasiatheria</taxon>
        <taxon>Artiodactyla</taxon>
        <taxon>Ruminantia</taxon>
        <taxon>Pecora</taxon>
        <taxon>Bovidae</taxon>
        <taxon>Bovinae</taxon>
        <taxon>Bos</taxon>
    </lineage>
</organism>
<sequence>MGDPSKQDILTIFKRLRSVPTNKVCFDCGAKNPSWASITYGVFLCIDCSGSHRSLGVHLSFIRSTELDSNWSWFQLRCMQVGGNANASSFFHQHGCDTNDTNAKYNSRAAQLYRERIKALASQATRKHGTDLWLDSCVVPPSSPPPKEEDFFASHASPEVSSTGWASAQPEPSLTPRNVDAPAASSEGVPEQGPSVEGLNVPTKAAVGEVSSIIKKKPNQAKRGLGAKKGSLGAQKLSNTCFNEIEKQAQAVDKMNAQEDLLSRAAPKEESIVSSLRLAYKDLEIQMKKDEKMNMSGKKKAESERLGMGFGNSRSGISHSVTSDMQTIEQETPITAKPRKKYGDDSDDSYFTSSSRFFDEPMELRSSSFSSWDDSSDSYWKKETIKDTDPIPKNTGYTDRPTTRRKPDSEPAENTDEAQKKFGNVKAISSDMYFGRQAKADYEARARLERLSASSSISSADLFDEQRKQTAGSYNLTSVLPTAPDMAQFKQGVRSVAGKLSVFANGVMTSIQDRYGS</sequence>
<proteinExistence type="evidence at transcript level"/>
<accession>Q17R07</accession>
<gene>
    <name evidence="1" type="primary">ARFGAP3</name>
</gene>
<comment type="function">
    <text evidence="1 5">GTPase-activating protein (GAP) for ADP ribosylation factor 1 (ARF1) (PubMed:1910037). Hydrolysis of ARF1-bound GTP may lead to dissociation of coatomer from Golgi-derived membranes to allow fusion with target membranes (By similarity).</text>
</comment>
<comment type="activity regulation">
    <text evidence="1">GAP activity stimulated by phosphatidylinositol 4,5-bisphosphate (PIP2).</text>
</comment>
<comment type="subcellular location">
    <subcellularLocation>
        <location evidence="1">Cytoplasm</location>
    </subcellularLocation>
    <subcellularLocation>
        <location evidence="1">Golgi apparatus membrane</location>
        <topology evidence="1">Peripheral membrane protein</topology>
        <orientation evidence="1">Cytoplasmic side</orientation>
    </subcellularLocation>
    <text evidence="1">Also found on peripheral punctate structures likely to be endoplasmic reticulum-Golgi intermediate compartment.</text>
</comment>
<protein>
    <recommendedName>
        <fullName>ADP-ribosylation factor GTPase-activating protein 3</fullName>
        <shortName>ARF GAP 3</shortName>
    </recommendedName>
</protein>
<evidence type="ECO:0000250" key="1">
    <source>
        <dbReference type="UniProtKB" id="Q9NP61"/>
    </source>
</evidence>
<evidence type="ECO:0000255" key="2"/>
<evidence type="ECO:0000255" key="3">
    <source>
        <dbReference type="PROSITE-ProRule" id="PRU00288"/>
    </source>
</evidence>
<evidence type="ECO:0000256" key="4">
    <source>
        <dbReference type="SAM" id="MobiDB-lite"/>
    </source>
</evidence>
<evidence type="ECO:0000269" key="5">
    <source>
    </source>
</evidence>
<evidence type="ECO:0000312" key="6">
    <source>
        <dbReference type="EMBL" id="AAI18088.1"/>
    </source>
</evidence>
<reference evidence="6" key="1">
    <citation type="submission" date="2006-06" db="EMBL/GenBank/DDBJ databases">
        <authorList>
            <consortium name="NIH - Mammalian Gene Collection (MGC) project"/>
        </authorList>
    </citation>
    <scope>NUCLEOTIDE SEQUENCE [LARGE SCALE MRNA]</scope>
    <source>
        <strain evidence="6">Hereford</strain>
        <tissue evidence="6">Uterus</tissue>
    </source>
</reference>
<reference key="2">
    <citation type="journal article" date="1991" name="J. Biol. Chem.">
        <title>Rsr1 and Rap1 GTPases are activated by the same GTPase-activating protein and require threonine 65 for their activation.</title>
        <authorList>
            <person name="Holden J.L."/>
            <person name="Nur-E-Kamal M.S."/>
            <person name="Fabri L."/>
            <person name="Nice E."/>
            <person name="Hammacher A."/>
            <person name="Maruta H."/>
        </authorList>
    </citation>
    <scope>FUNCTION</scope>
</reference>
<feature type="chain" id="PRO_0000314052" description="ADP-ribosylation factor GTPase-activating protein 3">
    <location>
        <begin position="1"/>
        <end position="517"/>
    </location>
</feature>
<feature type="domain" description="Arf-GAP" evidence="3">
    <location>
        <begin position="10"/>
        <end position="126"/>
    </location>
</feature>
<feature type="zinc finger region" description="C4-type" evidence="3">
    <location>
        <begin position="25"/>
        <end position="48"/>
    </location>
</feature>
<feature type="region of interest" description="Disordered" evidence="4">
    <location>
        <begin position="139"/>
        <end position="200"/>
    </location>
</feature>
<feature type="region of interest" description="Disordered" evidence="4">
    <location>
        <begin position="291"/>
        <end position="349"/>
    </location>
</feature>
<feature type="region of interest" description="Disordered" evidence="4">
    <location>
        <begin position="362"/>
        <end position="422"/>
    </location>
</feature>
<feature type="coiled-coil region" evidence="2">
    <location>
        <begin position="243"/>
        <end position="263"/>
    </location>
</feature>
<feature type="compositionally biased region" description="Polar residues" evidence="4">
    <location>
        <begin position="159"/>
        <end position="176"/>
    </location>
</feature>
<feature type="compositionally biased region" description="Basic and acidic residues" evidence="4">
    <location>
        <begin position="291"/>
        <end position="305"/>
    </location>
</feature>
<feature type="compositionally biased region" description="Polar residues" evidence="4">
    <location>
        <begin position="312"/>
        <end position="333"/>
    </location>
</feature>
<feature type="compositionally biased region" description="Basic and acidic residues" evidence="4">
    <location>
        <begin position="379"/>
        <end position="390"/>
    </location>
</feature>
<feature type="modified residue" description="Phosphoserine" evidence="1">
    <location>
        <position position="231"/>
    </location>
</feature>
<feature type="modified residue" description="Phosphoserine" evidence="1">
    <location>
        <position position="271"/>
    </location>
</feature>
<feature type="modified residue" description="Phosphoserine" evidence="1">
    <location>
        <position position="275"/>
    </location>
</feature>
<feature type="modified residue" description="Phosphoserine" evidence="1">
    <location>
        <position position="371"/>
    </location>
</feature>
<feature type="modified residue" description="Phosphoserine" evidence="1">
    <location>
        <position position="429"/>
    </location>
</feature>
<feature type="modified residue" description="Phosphoserine" evidence="1">
    <location>
        <position position="452"/>
    </location>
</feature>
<feature type="modified residue" description="Phosphoserine" evidence="1">
    <location>
        <position position="454"/>
    </location>
</feature>
<feature type="modified residue" description="Phosphoserine" evidence="1">
    <location>
        <position position="456"/>
    </location>
</feature>
<feature type="modified residue" description="Phosphoserine" evidence="1">
    <location>
        <position position="458"/>
    </location>
</feature>
<feature type="modified residue" description="Phosphoserine" evidence="1">
    <location>
        <position position="459"/>
    </location>
</feature>
<dbReference type="EMBL" id="BC118087">
    <property type="protein sequence ID" value="AAI18088.1"/>
    <property type="molecule type" value="mRNA"/>
</dbReference>
<dbReference type="RefSeq" id="NP_001069442.1">
    <property type="nucleotide sequence ID" value="NM_001075974.1"/>
</dbReference>
<dbReference type="SMR" id="Q17R07"/>
<dbReference type="FunCoup" id="Q17R07">
    <property type="interactions" value="2598"/>
</dbReference>
<dbReference type="STRING" id="9913.ENSBTAP00000063574"/>
<dbReference type="PaxDb" id="9913-ENSBTAP00000050747"/>
<dbReference type="Ensembl" id="ENSBTAT00000053995.3">
    <property type="protein sequence ID" value="ENSBTAP00000050747.2"/>
    <property type="gene ID" value="ENSBTAG00000001057.7"/>
</dbReference>
<dbReference type="GeneID" id="532778"/>
<dbReference type="KEGG" id="bta:532778"/>
<dbReference type="CTD" id="26286"/>
<dbReference type="VEuPathDB" id="HostDB:ENSBTAG00000001057"/>
<dbReference type="VGNC" id="VGNC:26063">
    <property type="gene designation" value="ARFGAP3"/>
</dbReference>
<dbReference type="eggNOG" id="KOG0706">
    <property type="taxonomic scope" value="Eukaryota"/>
</dbReference>
<dbReference type="GeneTree" id="ENSGT00940000158466"/>
<dbReference type="HOGENOM" id="CLU_023062_6_2_1"/>
<dbReference type="InParanoid" id="Q17R07"/>
<dbReference type="OrthoDB" id="983479at2759"/>
<dbReference type="TreeFam" id="TF313985"/>
<dbReference type="Reactome" id="R-BTA-6807878">
    <property type="pathway name" value="COPI-mediated anterograde transport"/>
</dbReference>
<dbReference type="Reactome" id="R-BTA-6811434">
    <property type="pathway name" value="COPI-dependent Golgi-to-ER retrograde traffic"/>
</dbReference>
<dbReference type="Reactome" id="R-BTA-9013408">
    <property type="pathway name" value="RHOG GTPase cycle"/>
</dbReference>
<dbReference type="Proteomes" id="UP000009136">
    <property type="component" value="Chromosome 5"/>
</dbReference>
<dbReference type="Bgee" id="ENSBTAG00000001057">
    <property type="expression patterns" value="Expressed in granulosa cell and 112 other cell types or tissues"/>
</dbReference>
<dbReference type="GO" id="GO:0000139">
    <property type="term" value="C:Golgi membrane"/>
    <property type="evidence" value="ECO:0007669"/>
    <property type="project" value="UniProtKB-SubCell"/>
</dbReference>
<dbReference type="GO" id="GO:0005096">
    <property type="term" value="F:GTPase activator activity"/>
    <property type="evidence" value="ECO:0000318"/>
    <property type="project" value="GO_Central"/>
</dbReference>
<dbReference type="GO" id="GO:0008270">
    <property type="term" value="F:zinc ion binding"/>
    <property type="evidence" value="ECO:0007669"/>
    <property type="project" value="UniProtKB-KW"/>
</dbReference>
<dbReference type="GO" id="GO:0048205">
    <property type="term" value="P:COPI coating of Golgi vesicle"/>
    <property type="evidence" value="ECO:0000318"/>
    <property type="project" value="GO_Central"/>
</dbReference>
<dbReference type="GO" id="GO:0015031">
    <property type="term" value="P:protein transport"/>
    <property type="evidence" value="ECO:0007669"/>
    <property type="project" value="UniProtKB-KW"/>
</dbReference>
<dbReference type="CDD" id="cd09028">
    <property type="entry name" value="ArfGap_ArfGap3"/>
    <property type="match status" value="1"/>
</dbReference>
<dbReference type="FunFam" id="1.10.220.150:FF:000004">
    <property type="entry name" value="Putative ADP-ribosylation factor GTPase-activating protein 2"/>
    <property type="match status" value="1"/>
</dbReference>
<dbReference type="Gene3D" id="1.10.220.150">
    <property type="entry name" value="Arf GTPase activating protein"/>
    <property type="match status" value="1"/>
</dbReference>
<dbReference type="InterPro" id="IPR037278">
    <property type="entry name" value="ARFGAP/RecO"/>
</dbReference>
<dbReference type="InterPro" id="IPR001164">
    <property type="entry name" value="ArfGAP_dom"/>
</dbReference>
<dbReference type="InterPro" id="IPR038508">
    <property type="entry name" value="ArfGAP_dom_sf"/>
</dbReference>
<dbReference type="PANTHER" id="PTHR45686">
    <property type="entry name" value="ADP-RIBOSYLATION FACTOR GTPASE ACTIVATING PROTEIN 3, ISOFORM H-RELATED"/>
    <property type="match status" value="1"/>
</dbReference>
<dbReference type="PANTHER" id="PTHR45686:SF1">
    <property type="entry name" value="ADP-RIBOSYLATION FACTOR GTPASE-ACTIVATING PROTEIN 3"/>
    <property type="match status" value="1"/>
</dbReference>
<dbReference type="Pfam" id="PF01412">
    <property type="entry name" value="ArfGap"/>
    <property type="match status" value="1"/>
</dbReference>
<dbReference type="PRINTS" id="PR00405">
    <property type="entry name" value="REVINTRACTNG"/>
</dbReference>
<dbReference type="SMART" id="SM00105">
    <property type="entry name" value="ArfGap"/>
    <property type="match status" value="1"/>
</dbReference>
<dbReference type="SUPFAM" id="SSF57863">
    <property type="entry name" value="ArfGap/RecO-like zinc finger"/>
    <property type="match status" value="1"/>
</dbReference>
<dbReference type="PROSITE" id="PS50115">
    <property type="entry name" value="ARFGAP"/>
    <property type="match status" value="1"/>
</dbReference>
<keyword id="KW-0175">Coiled coil</keyword>
<keyword id="KW-0963">Cytoplasm</keyword>
<keyword id="KW-0931">ER-Golgi transport</keyword>
<keyword id="KW-0333">Golgi apparatus</keyword>
<keyword id="KW-0343">GTPase activation</keyword>
<keyword id="KW-0472">Membrane</keyword>
<keyword id="KW-0479">Metal-binding</keyword>
<keyword id="KW-0597">Phosphoprotein</keyword>
<keyword id="KW-0653">Protein transport</keyword>
<keyword id="KW-1185">Reference proteome</keyword>
<keyword id="KW-0813">Transport</keyword>
<keyword id="KW-0862">Zinc</keyword>
<keyword id="KW-0863">Zinc-finger</keyword>